<accession>Q7MUZ6</accession>
<feature type="chain" id="PRO_0000183117" description="Crossover junction endodeoxyribonuclease RuvC">
    <location>
        <begin position="1"/>
        <end position="189"/>
    </location>
</feature>
<feature type="active site" evidence="1">
    <location>
        <position position="12"/>
    </location>
</feature>
<feature type="active site" evidence="1">
    <location>
        <position position="72"/>
    </location>
</feature>
<feature type="active site" evidence="1">
    <location>
        <position position="147"/>
    </location>
</feature>
<feature type="binding site" evidence="1">
    <location>
        <position position="12"/>
    </location>
    <ligand>
        <name>Mg(2+)</name>
        <dbReference type="ChEBI" id="CHEBI:18420"/>
        <label>1</label>
    </ligand>
</feature>
<feature type="binding site" evidence="1">
    <location>
        <position position="72"/>
    </location>
    <ligand>
        <name>Mg(2+)</name>
        <dbReference type="ChEBI" id="CHEBI:18420"/>
        <label>2</label>
    </ligand>
</feature>
<feature type="binding site" evidence="1">
    <location>
        <position position="147"/>
    </location>
    <ligand>
        <name>Mg(2+)</name>
        <dbReference type="ChEBI" id="CHEBI:18420"/>
        <label>1</label>
    </ligand>
</feature>
<reference key="1">
    <citation type="journal article" date="2003" name="J. Bacteriol.">
        <title>Complete genome sequence of the oral pathogenic bacterium Porphyromonas gingivalis strain W83.</title>
        <authorList>
            <person name="Nelson K.E."/>
            <person name="Fleischmann R.D."/>
            <person name="DeBoy R.T."/>
            <person name="Paulsen I.T."/>
            <person name="Fouts D.E."/>
            <person name="Eisen J.A."/>
            <person name="Daugherty S.C."/>
            <person name="Dodson R.J."/>
            <person name="Durkin A.S."/>
            <person name="Gwinn M.L."/>
            <person name="Haft D.H."/>
            <person name="Kolonay J.F."/>
            <person name="Nelson W.C."/>
            <person name="Mason T.M."/>
            <person name="Tallon L."/>
            <person name="Gray J."/>
            <person name="Granger D."/>
            <person name="Tettelin H."/>
            <person name="Dong H."/>
            <person name="Galvin J.L."/>
            <person name="Duncan M.J."/>
            <person name="Dewhirst F.E."/>
            <person name="Fraser C.M."/>
        </authorList>
    </citation>
    <scope>NUCLEOTIDE SEQUENCE [LARGE SCALE GENOMIC DNA]</scope>
    <source>
        <strain>ATCC BAA-308 / W83</strain>
    </source>
</reference>
<comment type="function">
    <text evidence="1">The RuvA-RuvB-RuvC complex processes Holliday junction (HJ) DNA during genetic recombination and DNA repair. Endonuclease that resolves HJ intermediates. Cleaves cruciform DNA by making single-stranded nicks across the HJ at symmetrical positions within the homologous arms, yielding a 5'-phosphate and a 3'-hydroxyl group; requires a central core of homology in the junction. The consensus cleavage sequence is 5'-(A/T)TT(C/G)-3'. Cleavage occurs on the 3'-side of the TT dinucleotide at the point of strand exchange. HJ branch migration catalyzed by RuvA-RuvB allows RuvC to scan DNA until it finds its consensus sequence, where it cleaves and resolves the cruciform DNA.</text>
</comment>
<comment type="catalytic activity">
    <reaction evidence="1">
        <text>Endonucleolytic cleavage at a junction such as a reciprocal single-stranded crossover between two homologous DNA duplexes (Holliday junction).</text>
        <dbReference type="EC" id="3.1.21.10"/>
    </reaction>
</comment>
<comment type="cofactor">
    <cofactor evidence="1">
        <name>Mg(2+)</name>
        <dbReference type="ChEBI" id="CHEBI:18420"/>
    </cofactor>
    <text evidence="1">Binds 2 Mg(2+) ion per subunit.</text>
</comment>
<comment type="subunit">
    <text evidence="1">Homodimer which binds Holliday junction (HJ) DNA. The HJ becomes 2-fold symmetrical on binding to RuvC with unstacked arms; it has a different conformation from HJ DNA in complex with RuvA. In the full resolvosome a probable DNA-RuvA(4)-RuvB(12)-RuvC(2) complex forms which resolves the HJ.</text>
</comment>
<comment type="subcellular location">
    <subcellularLocation>
        <location evidence="1">Cytoplasm</location>
    </subcellularLocation>
</comment>
<comment type="similarity">
    <text evidence="1">Belongs to the RuvC family.</text>
</comment>
<gene>
    <name evidence="1" type="primary">ruvC</name>
    <name type="ordered locus">PG_1324</name>
</gene>
<organism>
    <name type="scientific">Porphyromonas gingivalis (strain ATCC BAA-308 / W83)</name>
    <dbReference type="NCBI Taxonomy" id="242619"/>
    <lineage>
        <taxon>Bacteria</taxon>
        <taxon>Pseudomonadati</taxon>
        <taxon>Bacteroidota</taxon>
        <taxon>Bacteroidia</taxon>
        <taxon>Bacteroidales</taxon>
        <taxon>Porphyromonadaceae</taxon>
        <taxon>Porphyromonas</taxon>
    </lineage>
</organism>
<keyword id="KW-0963">Cytoplasm</keyword>
<keyword id="KW-0227">DNA damage</keyword>
<keyword id="KW-0233">DNA recombination</keyword>
<keyword id="KW-0234">DNA repair</keyword>
<keyword id="KW-0238">DNA-binding</keyword>
<keyword id="KW-0255">Endonuclease</keyword>
<keyword id="KW-0378">Hydrolase</keyword>
<keyword id="KW-0460">Magnesium</keyword>
<keyword id="KW-0479">Metal-binding</keyword>
<keyword id="KW-0540">Nuclease</keyword>
<keyword id="KW-1185">Reference proteome</keyword>
<protein>
    <recommendedName>
        <fullName evidence="1">Crossover junction endodeoxyribonuclease RuvC</fullName>
        <ecNumber evidence="1">3.1.21.10</ecNumber>
    </recommendedName>
    <alternativeName>
        <fullName evidence="1">Holliday junction nuclease RuvC</fullName>
    </alternativeName>
    <alternativeName>
        <fullName evidence="1">Holliday junction resolvase RuvC</fullName>
    </alternativeName>
</protein>
<sequence>MSPKERIIMGVDPGTILMGYGMLHVVGNTPRLMAMGVIRLEKFDNHYIRLKRIFDRITGLIDEFLPDEMAIEAPFFGKNVQSMLKLGRAQGVAMAAALARDIPITEYAPMRIKQAITGNGNASKEQVAGMLQRYLRIPDEQMLPEMDATDGLAAAVCHFFQTSGPMARSGGSAVKNWKDFVNRNPDKVR</sequence>
<proteinExistence type="inferred from homology"/>
<evidence type="ECO:0000255" key="1">
    <source>
        <dbReference type="HAMAP-Rule" id="MF_00034"/>
    </source>
</evidence>
<name>RUVC_PORGI</name>
<dbReference type="EC" id="3.1.21.10" evidence="1"/>
<dbReference type="EMBL" id="AE015924">
    <property type="protein sequence ID" value="AAQ66394.1"/>
    <property type="molecule type" value="Genomic_DNA"/>
</dbReference>
<dbReference type="RefSeq" id="WP_004585537.1">
    <property type="nucleotide sequence ID" value="NC_002950.2"/>
</dbReference>
<dbReference type="SMR" id="Q7MUZ6"/>
<dbReference type="STRING" id="242619.PG_1324"/>
<dbReference type="EnsemblBacteria" id="AAQ66394">
    <property type="protein sequence ID" value="AAQ66394"/>
    <property type="gene ID" value="PG_1324"/>
</dbReference>
<dbReference type="KEGG" id="pgi:PG_1324"/>
<dbReference type="eggNOG" id="COG0817">
    <property type="taxonomic scope" value="Bacteria"/>
</dbReference>
<dbReference type="HOGENOM" id="CLU_091257_3_0_10"/>
<dbReference type="Proteomes" id="UP000000588">
    <property type="component" value="Chromosome"/>
</dbReference>
<dbReference type="GO" id="GO:0005737">
    <property type="term" value="C:cytoplasm"/>
    <property type="evidence" value="ECO:0007669"/>
    <property type="project" value="UniProtKB-SubCell"/>
</dbReference>
<dbReference type="GO" id="GO:0048476">
    <property type="term" value="C:Holliday junction resolvase complex"/>
    <property type="evidence" value="ECO:0007669"/>
    <property type="project" value="UniProtKB-UniRule"/>
</dbReference>
<dbReference type="GO" id="GO:0008821">
    <property type="term" value="F:crossover junction DNA endonuclease activity"/>
    <property type="evidence" value="ECO:0007669"/>
    <property type="project" value="UniProtKB-UniRule"/>
</dbReference>
<dbReference type="GO" id="GO:0003677">
    <property type="term" value="F:DNA binding"/>
    <property type="evidence" value="ECO:0007669"/>
    <property type="project" value="UniProtKB-KW"/>
</dbReference>
<dbReference type="GO" id="GO:0000287">
    <property type="term" value="F:magnesium ion binding"/>
    <property type="evidence" value="ECO:0007669"/>
    <property type="project" value="UniProtKB-UniRule"/>
</dbReference>
<dbReference type="GO" id="GO:0006310">
    <property type="term" value="P:DNA recombination"/>
    <property type="evidence" value="ECO:0007669"/>
    <property type="project" value="UniProtKB-UniRule"/>
</dbReference>
<dbReference type="GO" id="GO:0006281">
    <property type="term" value="P:DNA repair"/>
    <property type="evidence" value="ECO:0007669"/>
    <property type="project" value="UniProtKB-UniRule"/>
</dbReference>
<dbReference type="CDD" id="cd16962">
    <property type="entry name" value="RuvC"/>
    <property type="match status" value="1"/>
</dbReference>
<dbReference type="FunFam" id="3.30.420.10:FF:000002">
    <property type="entry name" value="Crossover junction endodeoxyribonuclease RuvC"/>
    <property type="match status" value="1"/>
</dbReference>
<dbReference type="Gene3D" id="3.30.420.10">
    <property type="entry name" value="Ribonuclease H-like superfamily/Ribonuclease H"/>
    <property type="match status" value="1"/>
</dbReference>
<dbReference type="HAMAP" id="MF_00034">
    <property type="entry name" value="RuvC"/>
    <property type="match status" value="1"/>
</dbReference>
<dbReference type="InterPro" id="IPR012337">
    <property type="entry name" value="RNaseH-like_sf"/>
</dbReference>
<dbReference type="InterPro" id="IPR036397">
    <property type="entry name" value="RNaseH_sf"/>
</dbReference>
<dbReference type="InterPro" id="IPR020563">
    <property type="entry name" value="X-over_junc_endoDNase_Mg_BS"/>
</dbReference>
<dbReference type="InterPro" id="IPR002176">
    <property type="entry name" value="X-over_junc_endoDNase_RuvC"/>
</dbReference>
<dbReference type="NCBIfam" id="TIGR00228">
    <property type="entry name" value="ruvC"/>
    <property type="match status" value="1"/>
</dbReference>
<dbReference type="PANTHER" id="PTHR30194">
    <property type="entry name" value="CROSSOVER JUNCTION ENDODEOXYRIBONUCLEASE RUVC"/>
    <property type="match status" value="1"/>
</dbReference>
<dbReference type="PANTHER" id="PTHR30194:SF3">
    <property type="entry name" value="CROSSOVER JUNCTION ENDODEOXYRIBONUCLEASE RUVC"/>
    <property type="match status" value="1"/>
</dbReference>
<dbReference type="Pfam" id="PF02075">
    <property type="entry name" value="RuvC"/>
    <property type="match status" value="1"/>
</dbReference>
<dbReference type="PRINTS" id="PR00696">
    <property type="entry name" value="RSOLVASERUVC"/>
</dbReference>
<dbReference type="SUPFAM" id="SSF53098">
    <property type="entry name" value="Ribonuclease H-like"/>
    <property type="match status" value="1"/>
</dbReference>
<dbReference type="PROSITE" id="PS01321">
    <property type="entry name" value="RUVC"/>
    <property type="match status" value="1"/>
</dbReference>